<comment type="function">
    <text evidence="1">F(1)F(0) ATP synthase produces ATP from ADP in the presence of a proton or sodium gradient. F-type ATPases consist of two structural domains, F(1) containing the extramembraneous catalytic core and F(0) containing the membrane proton channel, linked together by a central stalk and a peripheral stalk. During catalysis, ATP synthesis in the catalytic domain of F(1) is coupled via a rotary mechanism of the central stalk subunits to proton translocation.</text>
</comment>
<comment type="function">
    <text evidence="1">Key component of the F(0) channel; it plays a direct role in translocation across the membrane. A homomeric c-ring of between 10-14 subunits forms the central stalk rotor element with the F(1) delta and epsilon subunits.</text>
</comment>
<comment type="subunit">
    <text evidence="1">F-type ATPases have 2 components, F(1) - the catalytic core - and F(0) - the membrane proton channel. F(1) has five subunits: alpha(3), beta(3), gamma(1), delta(1), epsilon(1). F(0) has three main subunits: a(1), b(2) and c(10-14). The alpha and beta chains form an alternating ring which encloses part of the gamma chain. F(1) is attached to F(0) by a central stalk formed by the gamma and epsilon chains, while a peripheral stalk is formed by the delta and b chains.</text>
</comment>
<comment type="subcellular location">
    <subcellularLocation>
        <location evidence="1">Cell inner membrane</location>
        <topology evidence="1">Multi-pass membrane protein</topology>
    </subcellularLocation>
</comment>
<comment type="similarity">
    <text evidence="1">Belongs to the ATPase C chain family.</text>
</comment>
<dbReference type="EMBL" id="CP000606">
    <property type="protein sequence ID" value="ABO25713.1"/>
    <property type="molecule type" value="Genomic_DNA"/>
</dbReference>
<dbReference type="RefSeq" id="WP_011639455.1">
    <property type="nucleotide sequence ID" value="NC_009092.1"/>
</dbReference>
<dbReference type="SMR" id="A3QJR5"/>
<dbReference type="STRING" id="323850.Shew_3850"/>
<dbReference type="GeneID" id="90572057"/>
<dbReference type="KEGG" id="slo:Shew_3850"/>
<dbReference type="eggNOG" id="ENOG5032S3K">
    <property type="taxonomic scope" value="Bacteria"/>
</dbReference>
<dbReference type="HOGENOM" id="CLU_148047_1_0_6"/>
<dbReference type="OrthoDB" id="9811659at2"/>
<dbReference type="Proteomes" id="UP000001558">
    <property type="component" value="Chromosome"/>
</dbReference>
<dbReference type="GO" id="GO:0005886">
    <property type="term" value="C:plasma membrane"/>
    <property type="evidence" value="ECO:0007669"/>
    <property type="project" value="UniProtKB-SubCell"/>
</dbReference>
<dbReference type="GO" id="GO:0045259">
    <property type="term" value="C:proton-transporting ATP synthase complex"/>
    <property type="evidence" value="ECO:0007669"/>
    <property type="project" value="UniProtKB-KW"/>
</dbReference>
<dbReference type="GO" id="GO:0033177">
    <property type="term" value="C:proton-transporting two-sector ATPase complex, proton-transporting domain"/>
    <property type="evidence" value="ECO:0007669"/>
    <property type="project" value="InterPro"/>
</dbReference>
<dbReference type="GO" id="GO:0008289">
    <property type="term" value="F:lipid binding"/>
    <property type="evidence" value="ECO:0007669"/>
    <property type="project" value="UniProtKB-KW"/>
</dbReference>
<dbReference type="GO" id="GO:0046933">
    <property type="term" value="F:proton-transporting ATP synthase activity, rotational mechanism"/>
    <property type="evidence" value="ECO:0007669"/>
    <property type="project" value="UniProtKB-UniRule"/>
</dbReference>
<dbReference type="CDD" id="cd18185">
    <property type="entry name" value="ATP-synt_Fo_c_ATPE"/>
    <property type="match status" value="1"/>
</dbReference>
<dbReference type="FunFam" id="1.20.20.10:FF:000002">
    <property type="entry name" value="ATP synthase subunit c"/>
    <property type="match status" value="1"/>
</dbReference>
<dbReference type="Gene3D" id="1.20.20.10">
    <property type="entry name" value="F1F0 ATP synthase subunit C"/>
    <property type="match status" value="1"/>
</dbReference>
<dbReference type="HAMAP" id="MF_01396">
    <property type="entry name" value="ATP_synth_c_bact"/>
    <property type="match status" value="1"/>
</dbReference>
<dbReference type="InterPro" id="IPR005953">
    <property type="entry name" value="ATP_synth_csu_bac/chlpt"/>
</dbReference>
<dbReference type="InterPro" id="IPR000454">
    <property type="entry name" value="ATP_synth_F0_csu"/>
</dbReference>
<dbReference type="InterPro" id="IPR020537">
    <property type="entry name" value="ATP_synth_F0_csu_DDCD_BS"/>
</dbReference>
<dbReference type="InterPro" id="IPR038662">
    <property type="entry name" value="ATP_synth_F0_csu_sf"/>
</dbReference>
<dbReference type="InterPro" id="IPR002379">
    <property type="entry name" value="ATPase_proteolipid_c-like_dom"/>
</dbReference>
<dbReference type="InterPro" id="IPR035921">
    <property type="entry name" value="F/V-ATP_Csub_sf"/>
</dbReference>
<dbReference type="NCBIfam" id="TIGR01260">
    <property type="entry name" value="ATP_synt_c"/>
    <property type="match status" value="1"/>
</dbReference>
<dbReference type="NCBIfam" id="NF005363">
    <property type="entry name" value="PRK06876.1"/>
    <property type="match status" value="1"/>
</dbReference>
<dbReference type="Pfam" id="PF00137">
    <property type="entry name" value="ATP-synt_C"/>
    <property type="match status" value="1"/>
</dbReference>
<dbReference type="PRINTS" id="PR00124">
    <property type="entry name" value="ATPASEC"/>
</dbReference>
<dbReference type="SUPFAM" id="SSF81333">
    <property type="entry name" value="F1F0 ATP synthase subunit C"/>
    <property type="match status" value="1"/>
</dbReference>
<dbReference type="PROSITE" id="PS00605">
    <property type="entry name" value="ATPASE_C"/>
    <property type="match status" value="1"/>
</dbReference>
<gene>
    <name evidence="1" type="primary">atpE</name>
    <name type="ordered locus">Shew_3850</name>
</gene>
<evidence type="ECO:0000255" key="1">
    <source>
        <dbReference type="HAMAP-Rule" id="MF_01396"/>
    </source>
</evidence>
<accession>A3QJR5</accession>
<organism>
    <name type="scientific">Shewanella loihica (strain ATCC BAA-1088 / PV-4)</name>
    <dbReference type="NCBI Taxonomy" id="323850"/>
    <lineage>
        <taxon>Bacteria</taxon>
        <taxon>Pseudomonadati</taxon>
        <taxon>Pseudomonadota</taxon>
        <taxon>Gammaproteobacteria</taxon>
        <taxon>Alteromonadales</taxon>
        <taxon>Shewanellaceae</taxon>
        <taxon>Shewanella</taxon>
    </lineage>
</organism>
<proteinExistence type="inferred from homology"/>
<protein>
    <recommendedName>
        <fullName evidence="1">ATP synthase subunit c</fullName>
    </recommendedName>
    <alternativeName>
        <fullName evidence="1">ATP synthase F(0) sector subunit c</fullName>
    </alternativeName>
    <alternativeName>
        <fullName evidence="1">F-type ATPase subunit c</fullName>
        <shortName evidence="1">F-ATPase subunit c</shortName>
    </alternativeName>
    <alternativeName>
        <fullName evidence="1">Lipid-binding protein</fullName>
    </alternativeName>
</protein>
<keyword id="KW-0066">ATP synthesis</keyword>
<keyword id="KW-0997">Cell inner membrane</keyword>
<keyword id="KW-1003">Cell membrane</keyword>
<keyword id="KW-0138">CF(0)</keyword>
<keyword id="KW-0375">Hydrogen ion transport</keyword>
<keyword id="KW-0406">Ion transport</keyword>
<keyword id="KW-0446">Lipid-binding</keyword>
<keyword id="KW-0472">Membrane</keyword>
<keyword id="KW-1185">Reference proteome</keyword>
<keyword id="KW-0812">Transmembrane</keyword>
<keyword id="KW-1133">Transmembrane helix</keyword>
<keyword id="KW-0813">Transport</keyword>
<feature type="chain" id="PRO_1000184474" description="ATP synthase subunit c">
    <location>
        <begin position="1"/>
        <end position="83"/>
    </location>
</feature>
<feature type="transmembrane region" description="Helical" evidence="1">
    <location>
        <begin position="10"/>
        <end position="30"/>
    </location>
</feature>
<feature type="transmembrane region" description="Helical" evidence="1">
    <location>
        <begin position="52"/>
        <end position="72"/>
    </location>
</feature>
<feature type="site" description="Reversibly protonated during proton transport" evidence="1">
    <location>
        <position position="60"/>
    </location>
</feature>
<sequence length="83" mass="8469">METVLGMTAIAVALLIGMGALGTAIGFGLLGGKFLEGAARQPEMAPMLQVKMFIVAGLLDAVTMIGVGIALFMLFTNPLGAML</sequence>
<name>ATPL_SHELP</name>
<reference key="1">
    <citation type="submission" date="2007-03" db="EMBL/GenBank/DDBJ databases">
        <title>Complete sequence of Shewanella loihica PV-4.</title>
        <authorList>
            <consortium name="US DOE Joint Genome Institute"/>
            <person name="Copeland A."/>
            <person name="Lucas S."/>
            <person name="Lapidus A."/>
            <person name="Barry K."/>
            <person name="Detter J.C."/>
            <person name="Glavina del Rio T."/>
            <person name="Hammon N."/>
            <person name="Israni S."/>
            <person name="Dalin E."/>
            <person name="Tice H."/>
            <person name="Pitluck S."/>
            <person name="Chain P."/>
            <person name="Malfatti S."/>
            <person name="Shin M."/>
            <person name="Vergez L."/>
            <person name="Schmutz J."/>
            <person name="Larimer F."/>
            <person name="Land M."/>
            <person name="Hauser L."/>
            <person name="Kyrpides N."/>
            <person name="Mikhailova N."/>
            <person name="Romine M.F."/>
            <person name="Serres G."/>
            <person name="Fredrickson J."/>
            <person name="Tiedje J."/>
            <person name="Richardson P."/>
        </authorList>
    </citation>
    <scope>NUCLEOTIDE SEQUENCE [LARGE SCALE GENOMIC DNA]</scope>
    <source>
        <strain>ATCC BAA-1088 / PV-4</strain>
    </source>
</reference>